<dbReference type="EMBL" id="CP000559">
    <property type="protein sequence ID" value="ABN06262.1"/>
    <property type="molecule type" value="Genomic_DNA"/>
</dbReference>
<dbReference type="RefSeq" id="WP_011832463.1">
    <property type="nucleotide sequence ID" value="NC_008942.1"/>
</dbReference>
<dbReference type="SMR" id="A2SPK6"/>
<dbReference type="STRING" id="410358.Mlab_0084"/>
<dbReference type="GeneID" id="4796000"/>
<dbReference type="KEGG" id="mla:Mlab_0084"/>
<dbReference type="eggNOG" id="arCOG04067">
    <property type="taxonomic scope" value="Archaea"/>
</dbReference>
<dbReference type="HOGENOM" id="CLU_036235_0_3_2"/>
<dbReference type="OrthoDB" id="5987at2157"/>
<dbReference type="Proteomes" id="UP000000365">
    <property type="component" value="Chromosome"/>
</dbReference>
<dbReference type="GO" id="GO:0022625">
    <property type="term" value="C:cytosolic large ribosomal subunit"/>
    <property type="evidence" value="ECO:0007669"/>
    <property type="project" value="TreeGrafter"/>
</dbReference>
<dbReference type="GO" id="GO:0019843">
    <property type="term" value="F:rRNA binding"/>
    <property type="evidence" value="ECO:0007669"/>
    <property type="project" value="UniProtKB-UniRule"/>
</dbReference>
<dbReference type="GO" id="GO:0003735">
    <property type="term" value="F:structural constituent of ribosome"/>
    <property type="evidence" value="ECO:0007669"/>
    <property type="project" value="InterPro"/>
</dbReference>
<dbReference type="GO" id="GO:0002181">
    <property type="term" value="P:cytoplasmic translation"/>
    <property type="evidence" value="ECO:0007669"/>
    <property type="project" value="TreeGrafter"/>
</dbReference>
<dbReference type="FunFam" id="4.10.950.10:FF:000002">
    <property type="entry name" value="60S ribosomal protein L2"/>
    <property type="match status" value="1"/>
</dbReference>
<dbReference type="Gene3D" id="2.30.30.30">
    <property type="match status" value="1"/>
</dbReference>
<dbReference type="Gene3D" id="2.40.50.140">
    <property type="entry name" value="Nucleic acid-binding proteins"/>
    <property type="match status" value="1"/>
</dbReference>
<dbReference type="Gene3D" id="4.10.950.10">
    <property type="entry name" value="Ribosomal protein L2, domain 3"/>
    <property type="match status" value="1"/>
</dbReference>
<dbReference type="HAMAP" id="MF_01320_A">
    <property type="entry name" value="Ribosomal_uL2_A"/>
    <property type="match status" value="1"/>
</dbReference>
<dbReference type="InterPro" id="IPR012340">
    <property type="entry name" value="NA-bd_OB-fold"/>
</dbReference>
<dbReference type="InterPro" id="IPR014722">
    <property type="entry name" value="Rib_uL2_dom2"/>
</dbReference>
<dbReference type="InterPro" id="IPR002171">
    <property type="entry name" value="Ribosomal_uL2"/>
</dbReference>
<dbReference type="InterPro" id="IPR023672">
    <property type="entry name" value="Ribosomal_uL2_arc_euk"/>
</dbReference>
<dbReference type="InterPro" id="IPR022669">
    <property type="entry name" value="Ribosomal_uL2_C"/>
</dbReference>
<dbReference type="InterPro" id="IPR014726">
    <property type="entry name" value="Ribosomal_uL2_dom3"/>
</dbReference>
<dbReference type="InterPro" id="IPR022666">
    <property type="entry name" value="Ribosomal_uL2_RNA-bd_dom"/>
</dbReference>
<dbReference type="InterPro" id="IPR008991">
    <property type="entry name" value="Translation_prot_SH3-like_sf"/>
</dbReference>
<dbReference type="NCBIfam" id="NF007180">
    <property type="entry name" value="PRK09612.1"/>
    <property type="match status" value="1"/>
</dbReference>
<dbReference type="PANTHER" id="PTHR13691:SF16">
    <property type="entry name" value="LARGE RIBOSOMAL SUBUNIT PROTEIN UL2"/>
    <property type="match status" value="1"/>
</dbReference>
<dbReference type="PANTHER" id="PTHR13691">
    <property type="entry name" value="RIBOSOMAL PROTEIN L2"/>
    <property type="match status" value="1"/>
</dbReference>
<dbReference type="Pfam" id="PF00181">
    <property type="entry name" value="Ribosomal_L2"/>
    <property type="match status" value="1"/>
</dbReference>
<dbReference type="Pfam" id="PF03947">
    <property type="entry name" value="Ribosomal_L2_C"/>
    <property type="match status" value="1"/>
</dbReference>
<dbReference type="PIRSF" id="PIRSF002158">
    <property type="entry name" value="Ribosomal_L2"/>
    <property type="match status" value="1"/>
</dbReference>
<dbReference type="SMART" id="SM01383">
    <property type="entry name" value="Ribosomal_L2"/>
    <property type="match status" value="1"/>
</dbReference>
<dbReference type="SMART" id="SM01382">
    <property type="entry name" value="Ribosomal_L2_C"/>
    <property type="match status" value="1"/>
</dbReference>
<dbReference type="SUPFAM" id="SSF50249">
    <property type="entry name" value="Nucleic acid-binding proteins"/>
    <property type="match status" value="1"/>
</dbReference>
<dbReference type="SUPFAM" id="SSF50104">
    <property type="entry name" value="Translation proteins SH3-like domain"/>
    <property type="match status" value="1"/>
</dbReference>
<protein>
    <recommendedName>
        <fullName evidence="1">Large ribosomal subunit protein uL2</fullName>
    </recommendedName>
    <alternativeName>
        <fullName evidence="3">50S ribosomal protein L2</fullName>
    </alternativeName>
</protein>
<reference key="1">
    <citation type="journal article" date="2009" name="Stand. Genomic Sci.">
        <title>Complete genome sequence of Methanocorpusculum labreanum type strain Z.</title>
        <authorList>
            <person name="Anderson I.J."/>
            <person name="Sieprawska-Lupa M."/>
            <person name="Goltsman E."/>
            <person name="Lapidus A."/>
            <person name="Copeland A."/>
            <person name="Glavina Del Rio T."/>
            <person name="Tice H."/>
            <person name="Dalin E."/>
            <person name="Barry K."/>
            <person name="Pitluck S."/>
            <person name="Hauser L."/>
            <person name="Land M."/>
            <person name="Lucas S."/>
            <person name="Richardson P."/>
            <person name="Whitman W.B."/>
            <person name="Kyrpides N.C."/>
        </authorList>
    </citation>
    <scope>NUCLEOTIDE SEQUENCE [LARGE SCALE GENOMIC DNA]</scope>
    <source>
        <strain>ATCC 43576 / DSM 4855 / Z</strain>
    </source>
</reference>
<gene>
    <name evidence="1" type="primary">rpl2</name>
    <name type="ordered locus">Mlab_0084</name>
</gene>
<name>RL2_METLZ</name>
<organism>
    <name type="scientific">Methanocorpusculum labreanum (strain ATCC 43576 / DSM 4855 / Z)</name>
    <dbReference type="NCBI Taxonomy" id="410358"/>
    <lineage>
        <taxon>Archaea</taxon>
        <taxon>Methanobacteriati</taxon>
        <taxon>Methanobacteriota</taxon>
        <taxon>Stenosarchaea group</taxon>
        <taxon>Methanomicrobia</taxon>
        <taxon>Methanomicrobiales</taxon>
        <taxon>Methanocorpusculaceae</taxon>
        <taxon>Methanocorpusculum</taxon>
    </lineage>
</organism>
<comment type="function">
    <text evidence="1">One of the primary rRNA binding proteins. Required for association of the 30S and 50S subunits to form the 70S ribosome, for tRNA binding and peptide bond formation. It has been suggested to have peptidyltransferase activity; this is somewhat controversial. Makes several contacts with the 16S rRNA in the 70S ribosome.</text>
</comment>
<comment type="subunit">
    <text evidence="1">Part of the 50S ribosomal subunit. Forms a bridge to the 30S subunit in the 70S ribosome.</text>
</comment>
<comment type="similarity">
    <text evidence="1">Belongs to the universal ribosomal protein uL2 family.</text>
</comment>
<accession>A2SPK6</accession>
<feature type="chain" id="PRO_0000310050" description="Large ribosomal subunit protein uL2">
    <location>
        <begin position="1"/>
        <end position="240"/>
    </location>
</feature>
<feature type="region of interest" description="Disordered" evidence="2">
    <location>
        <begin position="1"/>
        <end position="20"/>
    </location>
</feature>
<feature type="region of interest" description="Disordered" evidence="2">
    <location>
        <begin position="204"/>
        <end position="240"/>
    </location>
</feature>
<feature type="compositionally biased region" description="Polar residues" evidence="2">
    <location>
        <begin position="1"/>
        <end position="10"/>
    </location>
</feature>
<keyword id="KW-1185">Reference proteome</keyword>
<keyword id="KW-0687">Ribonucleoprotein</keyword>
<keyword id="KW-0689">Ribosomal protein</keyword>
<keyword id="KW-0694">RNA-binding</keyword>
<keyword id="KW-0699">rRNA-binding</keyword>
<evidence type="ECO:0000255" key="1">
    <source>
        <dbReference type="HAMAP-Rule" id="MF_01320"/>
    </source>
</evidence>
<evidence type="ECO:0000256" key="2">
    <source>
        <dbReference type="SAM" id="MobiDB-lite"/>
    </source>
</evidence>
<evidence type="ECO:0000305" key="3"/>
<sequence>MGHRISTQSRGKGGPTYRAPSHQYKAELKHFGSALETVRATVIDIEHDPARHTPIAVVKIEGKASDKKEYALITEGVGIGQELVWGPEATVVNGNSLPLSAIPTGVAVCNIEARPGDGGKFVRSSGVQAVIIGKSAGKVGVRMPSGKPKWFNEACLATVGLVAGGGRIDKPILKAGKQYHKMKTSATRWPRVRGVAMNVIDHPFGGGGHQHPGKPKTVARGASPGRKVGSVAARRTGYRR</sequence>
<proteinExistence type="inferred from homology"/>